<keyword id="KW-0002">3D-structure</keyword>
<keyword id="KW-0007">Acetylation</keyword>
<keyword id="KW-0903">Direct protein sequencing</keyword>
<keyword id="KW-0349">Heme</keyword>
<keyword id="KW-0408">Iron</keyword>
<keyword id="KW-0479">Metal-binding</keyword>
<keyword id="KW-0561">Oxygen transport</keyword>
<keyword id="KW-0597">Phosphoprotein</keyword>
<keyword id="KW-1267">Proteomics identification</keyword>
<keyword id="KW-1185">Reference proteome</keyword>
<keyword id="KW-0813">Transport</keyword>
<dbReference type="EMBL" id="U01317">
    <property type="protein sequence ID" value="AAA16333.1"/>
    <property type="molecule type" value="Genomic_DNA"/>
</dbReference>
<dbReference type="EMBL" id="V00505">
    <property type="protein sequence ID" value="CAA23763.1"/>
    <property type="molecule type" value="Genomic_DNA"/>
</dbReference>
<dbReference type="EMBL" id="AF339401">
    <property type="protein sequence ID" value="AAL72102.1"/>
    <property type="molecule type" value="Genomic_DNA"/>
</dbReference>
<dbReference type="EMBL" id="AF339402">
    <property type="protein sequence ID" value="AAL72103.1"/>
    <property type="molecule type" value="Genomic_DNA"/>
</dbReference>
<dbReference type="EMBL" id="AF339403">
    <property type="protein sequence ID" value="AAL72104.1"/>
    <property type="molecule type" value="Genomic_DNA"/>
</dbReference>
<dbReference type="EMBL" id="AF339404">
    <property type="protein sequence ID" value="AAL72105.1"/>
    <property type="molecule type" value="Genomic_DNA"/>
</dbReference>
<dbReference type="EMBL" id="AF339405">
    <property type="protein sequence ID" value="AAL72106.1"/>
    <property type="molecule type" value="Genomic_DNA"/>
</dbReference>
<dbReference type="EMBL" id="AF339406">
    <property type="protein sequence ID" value="AAL72107.1"/>
    <property type="molecule type" value="Genomic_DNA"/>
</dbReference>
<dbReference type="EMBL" id="AF339407">
    <property type="protein sequence ID" value="AAL72108.1"/>
    <property type="molecule type" value="Genomic_DNA"/>
</dbReference>
<dbReference type="EMBL" id="AF339408">
    <property type="protein sequence ID" value="AAL72109.1"/>
    <property type="molecule type" value="Genomic_DNA"/>
</dbReference>
<dbReference type="EMBL" id="AF339409">
    <property type="protein sequence ID" value="AAL72110.1"/>
    <property type="molecule type" value="Genomic_DNA"/>
</dbReference>
<dbReference type="EMBL" id="AF339410">
    <property type="protein sequence ID" value="AAL72111.1"/>
    <property type="molecule type" value="Genomic_DNA"/>
</dbReference>
<dbReference type="EMBL" id="AF339411">
    <property type="protein sequence ID" value="AAL72112.1"/>
    <property type="molecule type" value="Genomic_DNA"/>
</dbReference>
<dbReference type="EMBL" id="AF339412">
    <property type="protein sequence ID" value="AAL72113.1"/>
    <property type="molecule type" value="Genomic_DNA"/>
</dbReference>
<dbReference type="EMBL" id="AF339413">
    <property type="protein sequence ID" value="AAL72114.1"/>
    <property type="molecule type" value="Genomic_DNA"/>
</dbReference>
<dbReference type="EMBL" id="AF339414">
    <property type="protein sequence ID" value="AAL72115.1"/>
    <property type="molecule type" value="Genomic_DNA"/>
</dbReference>
<dbReference type="EMBL" id="AF339415">
    <property type="protein sequence ID" value="AAL72116.1"/>
    <property type="molecule type" value="Genomic_DNA"/>
</dbReference>
<dbReference type="EMBL" id="AF339416">
    <property type="protein sequence ID" value="AAL72117.1"/>
    <property type="molecule type" value="Genomic_DNA"/>
</dbReference>
<dbReference type="EMBL" id="AF339417">
    <property type="protein sequence ID" value="AAL72118.1"/>
    <property type="molecule type" value="Genomic_DNA"/>
</dbReference>
<dbReference type="EMBL" id="AY034468">
    <property type="protein sequence ID" value="AAK68847.1"/>
    <property type="molecule type" value="mRNA"/>
</dbReference>
<dbReference type="EMBL" id="DQ157442">
    <property type="protein sequence ID" value="AAZ83699.1"/>
    <property type="molecule type" value="Genomic_DNA"/>
</dbReference>
<dbReference type="EMBL" id="BC069307">
    <property type="protein sequence ID" value="AAH69307.1"/>
    <property type="molecule type" value="mRNA"/>
</dbReference>
<dbReference type="EMBL" id="BC070282">
    <property type="protein sequence ID" value="AAH70282.1"/>
    <property type="molecule type" value="mRNA"/>
</dbReference>
<dbReference type="CCDS" id="CCDS31376.1"/>
<dbReference type="PIR" id="A90804">
    <property type="entry name" value="HDHU"/>
</dbReference>
<dbReference type="RefSeq" id="NP_000510.1">
    <property type="nucleotide sequence ID" value="NM_000519.4"/>
</dbReference>
<dbReference type="PDB" id="1SHR">
    <property type="method" value="X-ray"/>
    <property type="resolution" value="1.88 A"/>
    <property type="chains" value="B/D=2-147"/>
</dbReference>
<dbReference type="PDB" id="1SI4">
    <property type="method" value="X-ray"/>
    <property type="resolution" value="2.20 A"/>
    <property type="chains" value="B/D=2-147"/>
</dbReference>
<dbReference type="PDBsum" id="1SHR"/>
<dbReference type="PDBsum" id="1SI4"/>
<dbReference type="SMR" id="P02042"/>
<dbReference type="BioGRID" id="109295">
    <property type="interactions" value="97"/>
</dbReference>
<dbReference type="ComplexPortal" id="CPX-2419">
    <property type="entry name" value="Hemoglobin HbA2 complex"/>
</dbReference>
<dbReference type="CORUM" id="P02042"/>
<dbReference type="FunCoup" id="P02042">
    <property type="interactions" value="25"/>
</dbReference>
<dbReference type="IntAct" id="P02042">
    <property type="interactions" value="32"/>
</dbReference>
<dbReference type="STRING" id="9606.ENSP00000494708"/>
<dbReference type="GlyGen" id="P02042">
    <property type="glycosylation" value="1 site, 1 O-linked glycan (1 site)"/>
</dbReference>
<dbReference type="iPTMnet" id="P02042"/>
<dbReference type="PhosphoSitePlus" id="P02042"/>
<dbReference type="BioMuta" id="HBD"/>
<dbReference type="REPRODUCTION-2DPAGE" id="IPI00473011"/>
<dbReference type="jPOST" id="P02042"/>
<dbReference type="MassIVE" id="P02042"/>
<dbReference type="PaxDb" id="9606-ENSP00000369654"/>
<dbReference type="PeptideAtlas" id="P02042"/>
<dbReference type="ProteomicsDB" id="51515"/>
<dbReference type="Pumba" id="P02042"/>
<dbReference type="TopDownProteomics" id="P02042"/>
<dbReference type="Antibodypedia" id="42203">
    <property type="antibodies" value="77 antibodies from 17 providers"/>
</dbReference>
<dbReference type="DNASU" id="3045"/>
<dbReference type="Ensembl" id="ENST00000643122.1">
    <property type="protein sequence ID" value="ENSP00000494708.1"/>
    <property type="gene ID" value="ENSG00000223609.11"/>
</dbReference>
<dbReference type="Ensembl" id="ENST00000650601.1">
    <property type="protein sequence ID" value="ENSP00000497529.1"/>
    <property type="gene ID" value="ENSG00000223609.11"/>
</dbReference>
<dbReference type="GeneID" id="3045"/>
<dbReference type="KEGG" id="hsa:3045"/>
<dbReference type="MANE-Select" id="ENST00000650601.1">
    <property type="protein sequence ID" value="ENSP00000497529.1"/>
    <property type="RefSeq nucleotide sequence ID" value="NM_000519.4"/>
    <property type="RefSeq protein sequence ID" value="NP_000510.1"/>
</dbReference>
<dbReference type="UCSC" id="uc001maf.2">
    <property type="organism name" value="human"/>
</dbReference>
<dbReference type="AGR" id="HGNC:4829"/>
<dbReference type="CTD" id="3045"/>
<dbReference type="DisGeNET" id="3045"/>
<dbReference type="GeneCards" id="HBD"/>
<dbReference type="HGNC" id="HGNC:4829">
    <property type="gene designation" value="HBD"/>
</dbReference>
<dbReference type="HPA" id="ENSG00000223609">
    <property type="expression patterns" value="Tissue enriched (bone)"/>
</dbReference>
<dbReference type="MalaCards" id="HBD"/>
<dbReference type="MIM" id="142000">
    <property type="type" value="gene"/>
</dbReference>
<dbReference type="neXtProt" id="NX_P02042"/>
<dbReference type="OpenTargets" id="ENSG00000223609"/>
<dbReference type="Orphanet" id="231237">
    <property type="disease" value="Delta-beta-thalassemia"/>
</dbReference>
<dbReference type="Orphanet" id="330032">
    <property type="disease" value="Hemoglobin Lepore-beta-thalassemia syndrome"/>
</dbReference>
<dbReference type="PharmGKB" id="PA29204"/>
<dbReference type="VEuPathDB" id="HostDB:ENSG00000223609"/>
<dbReference type="eggNOG" id="KOG3378">
    <property type="taxonomic scope" value="Eukaryota"/>
</dbReference>
<dbReference type="GeneTree" id="ENSGT00940000163476"/>
<dbReference type="HOGENOM" id="CLU_003827_10_0_1"/>
<dbReference type="InParanoid" id="P02042"/>
<dbReference type="OMA" id="MVEWSEN"/>
<dbReference type="OrthoDB" id="9886081at2759"/>
<dbReference type="PAN-GO" id="P02042">
    <property type="GO annotations" value="10 GO annotations based on evolutionary models"/>
</dbReference>
<dbReference type="PhylomeDB" id="P02042"/>
<dbReference type="TreeFam" id="TF333268"/>
<dbReference type="PathwayCommons" id="P02042"/>
<dbReference type="Reactome" id="R-HSA-983231">
    <property type="pathway name" value="Factors involved in megakaryocyte development and platelet production"/>
</dbReference>
<dbReference type="SignaLink" id="P02042"/>
<dbReference type="SIGNOR" id="P02042"/>
<dbReference type="BioGRID-ORCS" id="3045">
    <property type="hits" value="7 hits in 1128 CRISPR screens"/>
</dbReference>
<dbReference type="ChiTaRS" id="HBD">
    <property type="organism name" value="human"/>
</dbReference>
<dbReference type="EvolutionaryTrace" id="P02042"/>
<dbReference type="GeneWiki" id="HBD"/>
<dbReference type="GenomeRNAi" id="3045"/>
<dbReference type="Pharos" id="P02042">
    <property type="development level" value="Tbio"/>
</dbReference>
<dbReference type="PRO" id="PR:P02042"/>
<dbReference type="Proteomes" id="UP000005640">
    <property type="component" value="Chromosome 11"/>
</dbReference>
<dbReference type="RNAct" id="P02042">
    <property type="molecule type" value="protein"/>
</dbReference>
<dbReference type="Bgee" id="ENSG00000223609">
    <property type="expression patterns" value="Expressed in trabecular bone tissue and 125 other cell types or tissues"/>
</dbReference>
<dbReference type="ExpressionAtlas" id="P02042">
    <property type="expression patterns" value="baseline and differential"/>
</dbReference>
<dbReference type="GO" id="GO:0072562">
    <property type="term" value="C:blood microparticle"/>
    <property type="evidence" value="ECO:0007005"/>
    <property type="project" value="UniProtKB"/>
</dbReference>
<dbReference type="GO" id="GO:0005829">
    <property type="term" value="C:cytosol"/>
    <property type="evidence" value="ECO:0000304"/>
    <property type="project" value="Reactome"/>
</dbReference>
<dbReference type="GO" id="GO:0031838">
    <property type="term" value="C:haptoglobin-hemoglobin complex"/>
    <property type="evidence" value="ECO:0000318"/>
    <property type="project" value="GO_Central"/>
</dbReference>
<dbReference type="GO" id="GO:0005833">
    <property type="term" value="C:hemoglobin complex"/>
    <property type="evidence" value="ECO:0000353"/>
    <property type="project" value="ComplexPortal"/>
</dbReference>
<dbReference type="GO" id="GO:0020037">
    <property type="term" value="F:heme binding"/>
    <property type="evidence" value="ECO:0000318"/>
    <property type="project" value="GO_Central"/>
</dbReference>
<dbReference type="GO" id="GO:0031721">
    <property type="term" value="F:hemoglobin alpha binding"/>
    <property type="evidence" value="ECO:0000318"/>
    <property type="project" value="GO_Central"/>
</dbReference>
<dbReference type="GO" id="GO:0046872">
    <property type="term" value="F:metal ion binding"/>
    <property type="evidence" value="ECO:0007669"/>
    <property type="project" value="UniProtKB-KW"/>
</dbReference>
<dbReference type="GO" id="GO:0019825">
    <property type="term" value="F:oxygen binding"/>
    <property type="evidence" value="ECO:0000318"/>
    <property type="project" value="GO_Central"/>
</dbReference>
<dbReference type="GO" id="GO:0005344">
    <property type="term" value="F:oxygen carrier activity"/>
    <property type="evidence" value="ECO:0000318"/>
    <property type="project" value="GO_Central"/>
</dbReference>
<dbReference type="GO" id="GO:0015670">
    <property type="term" value="P:carbon dioxide transport"/>
    <property type="evidence" value="ECO:0000303"/>
    <property type="project" value="ComplexPortal"/>
</dbReference>
<dbReference type="GO" id="GO:0098869">
    <property type="term" value="P:cellular oxidant detoxification"/>
    <property type="evidence" value="ECO:0007669"/>
    <property type="project" value="GOC"/>
</dbReference>
<dbReference type="GO" id="GO:0042744">
    <property type="term" value="P:hydrogen peroxide catabolic process"/>
    <property type="evidence" value="ECO:0000318"/>
    <property type="project" value="GO_Central"/>
</dbReference>
<dbReference type="GO" id="GO:0015671">
    <property type="term" value="P:oxygen transport"/>
    <property type="evidence" value="ECO:0000314"/>
    <property type="project" value="ComplexPortal"/>
</dbReference>
<dbReference type="CDD" id="cd08925">
    <property type="entry name" value="Hb-beta-like"/>
    <property type="match status" value="1"/>
</dbReference>
<dbReference type="FunFam" id="1.10.490.10:FF:000001">
    <property type="entry name" value="Hemoglobin subunit beta"/>
    <property type="match status" value="1"/>
</dbReference>
<dbReference type="Gene3D" id="1.10.490.10">
    <property type="entry name" value="Globins"/>
    <property type="match status" value="1"/>
</dbReference>
<dbReference type="InterPro" id="IPR000971">
    <property type="entry name" value="Globin"/>
</dbReference>
<dbReference type="InterPro" id="IPR009050">
    <property type="entry name" value="Globin-like_sf"/>
</dbReference>
<dbReference type="InterPro" id="IPR012292">
    <property type="entry name" value="Globin/Proto"/>
</dbReference>
<dbReference type="InterPro" id="IPR002337">
    <property type="entry name" value="Hemoglobin_b"/>
</dbReference>
<dbReference type="InterPro" id="IPR050056">
    <property type="entry name" value="Hemoglobin_oxygen_transport"/>
</dbReference>
<dbReference type="PANTHER" id="PTHR11442">
    <property type="entry name" value="HEMOGLOBIN FAMILY MEMBER"/>
    <property type="match status" value="1"/>
</dbReference>
<dbReference type="PANTHER" id="PTHR11442:SF50">
    <property type="entry name" value="HEMOGLOBIN SUBUNIT DELTA"/>
    <property type="match status" value="1"/>
</dbReference>
<dbReference type="Pfam" id="PF00042">
    <property type="entry name" value="Globin"/>
    <property type="match status" value="1"/>
</dbReference>
<dbReference type="PRINTS" id="PR00814">
    <property type="entry name" value="BETAHAEM"/>
</dbReference>
<dbReference type="SUPFAM" id="SSF46458">
    <property type="entry name" value="Globin-like"/>
    <property type="match status" value="1"/>
</dbReference>
<dbReference type="PROSITE" id="PS01033">
    <property type="entry name" value="GLOBIN"/>
    <property type="match status" value="1"/>
</dbReference>
<gene>
    <name type="primary">HBD</name>
</gene>
<organism>
    <name type="scientific">Homo sapiens</name>
    <name type="common">Human</name>
    <dbReference type="NCBI Taxonomy" id="9606"/>
    <lineage>
        <taxon>Eukaryota</taxon>
        <taxon>Metazoa</taxon>
        <taxon>Chordata</taxon>
        <taxon>Craniata</taxon>
        <taxon>Vertebrata</taxon>
        <taxon>Euteleostomi</taxon>
        <taxon>Mammalia</taxon>
        <taxon>Eutheria</taxon>
        <taxon>Euarchontoglires</taxon>
        <taxon>Primates</taxon>
        <taxon>Haplorrhini</taxon>
        <taxon>Catarrhini</taxon>
        <taxon>Hominidae</taxon>
        <taxon>Homo</taxon>
    </lineage>
</organism>
<protein>
    <recommendedName>
        <fullName>Hemoglobin subunit delta</fullName>
    </recommendedName>
    <alternativeName>
        <fullName>Delta-globin</fullName>
    </alternativeName>
    <alternativeName>
        <fullName>Hemoglobin delta chain</fullName>
    </alternativeName>
</protein>
<sequence>MVHLTPEEKTAVNALWGKVNVDAVGGEALGRLLVVYPWTQRFFESFGDLSSPDAVMGNPKVKAHGKKVLGAFSDGLAHLDNLKGTFSQLSELHCDKLHVDPENFRLLGNVLVCVLARNFGKEFTPQMQAAYQKVVAGVANALAHKYH</sequence>
<comment type="function">
    <text>Involved in oxygen transport from the lung to the various peripheral tissues.</text>
</comment>
<comment type="subunit">
    <text evidence="6">Heterotetramer of two alpha chains and two delta chains in adult hemoglobin A2 (HbA2). HbA2 represents less than 3.5% of adult hemoglobin.</text>
</comment>
<comment type="interaction">
    <interactant intactId="EBI-6152722">
        <id>P02042</id>
    </interactant>
    <interactant intactId="EBI-714680">
        <id>P69905</id>
        <label>HBA2</label>
    </interactant>
    <organismsDiffer>false</organismsDiffer>
    <experiments>3</experiments>
</comment>
<comment type="interaction">
    <interactant intactId="EBI-6152722">
        <id>P02042</id>
    </interactant>
    <interactant intactId="EBI-10193656">
        <id>P09105</id>
        <label>HBQ1</label>
    </interactant>
    <organismsDiffer>false</organismsDiffer>
    <experiments>6</experiments>
</comment>
<comment type="interaction">
    <interactant intactId="EBI-6152722">
        <id>P02042</id>
    </interactant>
    <interactant intactId="EBI-719843">
        <id>P02008</id>
        <label>HBZ</label>
    </interactant>
    <organismsDiffer>false</organismsDiffer>
    <experiments>8</experiments>
</comment>
<comment type="interaction">
    <interactant intactId="EBI-6152722">
        <id>P02042</id>
    </interactant>
    <interactant intactId="EBI-744871">
        <id>O00746</id>
        <label>NME4</label>
    </interactant>
    <organismsDiffer>false</organismsDiffer>
    <experiments>3</experiments>
</comment>
<comment type="tissue specificity">
    <text>Red blood cells.</text>
</comment>
<comment type="similarity">
    <text evidence="2">Belongs to the globin family.</text>
</comment>
<comment type="online information" name="HbVar">
    <link uri="https://globin.bx.psu.edu/cgi-bin/hbvar/query_vars3?mode=directlink&amp;gene=HBD"/>
    <text>Human hemoglobin variants and thalassemias</text>
</comment>
<evidence type="ECO:0000250" key="1">
    <source>
        <dbReference type="UniProtKB" id="P80044"/>
    </source>
</evidence>
<evidence type="ECO:0000255" key="2">
    <source>
        <dbReference type="PROSITE-ProRule" id="PRU00238"/>
    </source>
</evidence>
<evidence type="ECO:0000269" key="3">
    <source>
    </source>
</evidence>
<evidence type="ECO:0000269" key="4">
    <source>
    </source>
</evidence>
<evidence type="ECO:0000269" key="5">
    <source>
    </source>
</evidence>
<evidence type="ECO:0000269" key="6">
    <source>
    </source>
</evidence>
<evidence type="ECO:0000269" key="7">
    <source>
    </source>
</evidence>
<evidence type="ECO:0000269" key="8">
    <source>
    </source>
</evidence>
<evidence type="ECO:0000269" key="9">
    <source>
    </source>
</evidence>
<evidence type="ECO:0000269" key="10">
    <source>
    </source>
</evidence>
<evidence type="ECO:0000269" key="11">
    <source>
    </source>
</evidence>
<evidence type="ECO:0000269" key="12">
    <source>
    </source>
</evidence>
<evidence type="ECO:0000269" key="13">
    <source>
    </source>
</evidence>
<evidence type="ECO:0000269" key="14">
    <source>
    </source>
</evidence>
<evidence type="ECO:0000269" key="15">
    <source>
    </source>
</evidence>
<evidence type="ECO:0000269" key="16">
    <source>
    </source>
</evidence>
<evidence type="ECO:0000269" key="17">
    <source>
    </source>
</evidence>
<evidence type="ECO:0000269" key="18">
    <source>
    </source>
</evidence>
<evidence type="ECO:0000269" key="19">
    <source>
    </source>
</evidence>
<evidence type="ECO:0000269" key="20">
    <source>
    </source>
</evidence>
<evidence type="ECO:0000269" key="21">
    <source>
    </source>
</evidence>
<evidence type="ECO:0000269" key="22">
    <source>
    </source>
</evidence>
<evidence type="ECO:0000269" key="23">
    <source>
    </source>
</evidence>
<evidence type="ECO:0000269" key="24">
    <source>
    </source>
</evidence>
<evidence type="ECO:0000269" key="25">
    <source>
    </source>
</evidence>
<evidence type="ECO:0000269" key="26">
    <source>
    </source>
</evidence>
<evidence type="ECO:0000269" key="27">
    <source>
    </source>
</evidence>
<evidence type="ECO:0000269" key="28">
    <source>
    </source>
</evidence>
<evidence type="ECO:0000269" key="29">
    <source>
    </source>
</evidence>
<evidence type="ECO:0000269" key="30">
    <source>
    </source>
</evidence>
<evidence type="ECO:0000269" key="31">
    <source>
    </source>
</evidence>
<evidence type="ECO:0000269" key="32">
    <source>
    </source>
</evidence>
<evidence type="ECO:0000269" key="33">
    <source>
    </source>
</evidence>
<evidence type="ECO:0000269" key="34">
    <source>
    </source>
</evidence>
<evidence type="ECO:0000269" key="35">
    <source>
    </source>
</evidence>
<evidence type="ECO:0000269" key="36">
    <source ref="2"/>
</evidence>
<evidence type="ECO:0007744" key="37">
    <source>
        <dbReference type="PDB" id="1SHR"/>
    </source>
</evidence>
<evidence type="ECO:0007744" key="38">
    <source>
        <dbReference type="PDB" id="1SI4"/>
    </source>
</evidence>
<evidence type="ECO:0007744" key="39">
    <source>
    </source>
</evidence>
<evidence type="ECO:0007829" key="40">
    <source>
        <dbReference type="PDB" id="1SHR"/>
    </source>
</evidence>
<name>HBD_HUMAN</name>
<accession>P02042</accession>
<accession>Q3Y5H3</accession>
<accession>Q8WXT7</accession>
<reference key="1">
    <citation type="journal article" date="1980" name="Cell">
        <title>Complete nucleotide sequence of the human delta-globin gene.</title>
        <authorList>
            <person name="Spritz R.A."/>
            <person name="Deriel J.K."/>
            <person name="Forget B.G."/>
            <person name="Weissman S.M."/>
        </authorList>
    </citation>
    <scope>NUCLEOTIDE SEQUENCE [GENOMIC DNA]</scope>
</reference>
<reference key="2">
    <citation type="submission" date="2001-01" db="EMBL/GenBank/DDBJ databases">
        <title>Heterogeneous patterns of sequence variation in the human beta-globin gene cluster.</title>
        <authorList>
            <person name="Webster M.T."/>
            <person name="Harding R.M."/>
            <person name="Wells R.S."/>
            <person name="Clegg J.B."/>
        </authorList>
    </citation>
    <scope>NUCLEOTIDE SEQUENCE [GENOMIC DNA]</scope>
    <scope>VARIANT SER-5</scope>
</reference>
<reference key="3">
    <citation type="submission" date="2001-05" db="EMBL/GenBank/DDBJ databases">
        <title>Alternate delta globin transcript.</title>
        <authorList>
            <person name="Lee T."/>
            <person name="Gubin A."/>
            <person name="Miller J.L."/>
        </authorList>
    </citation>
    <scope>NUCLEOTIDE SEQUENCE [MRNA]</scope>
</reference>
<reference key="4">
    <citation type="journal article" date="2005" name="Hemoglobin">
        <title>The IVS-II-1(G&gt;A) betao-thalassemia mutation in cis with HbA2-Troodos [Delta 116 (G18) Arg&gt;Cys (CGC&gt;TGC)] causes a complex prenatal diagnosis in an Iranian family.</title>
        <authorList>
            <person name="Eram S.M."/>
            <person name="Azimifar S.B."/>
            <person name="Abolghassemi H."/>
            <person name="Foulady P."/>
            <person name="Lotfi V."/>
            <person name="Masroury M."/>
            <person name="Hosseini M."/>
            <person name="Abdolhosseini A."/>
        </authorList>
    </citation>
    <scope>NUCLEOTIDE SEQUENCE [GENOMIC DNA]</scope>
    <scope>VARIANT TROODOS CYS-117</scope>
    <source>
        <tissue>Blood</tissue>
    </source>
</reference>
<reference key="5">
    <citation type="journal article" date="2004" name="Genome Res.">
        <title>The status, quality, and expansion of the NIH full-length cDNA project: the Mammalian Gene Collection (MGC).</title>
        <authorList>
            <consortium name="The MGC Project Team"/>
        </authorList>
    </citation>
    <scope>NUCLEOTIDE SEQUENCE [LARGE SCALE MRNA]</scope>
    <source>
        <tissue>Blood</tissue>
    </source>
</reference>
<reference key="6">
    <citation type="journal article" date="1978" name="Hoppe-Seyler's Z. Physiol. Chem.">
        <title>Hemoglobins, XXIII. Note on the sequence of the delta-chains of human hemoglobin.</title>
        <authorList>
            <person name="Braunitzer G."/>
            <person name="Schrank B."/>
            <person name="Stangl A."/>
            <person name="Grillemeier M."/>
        </authorList>
    </citation>
    <scope>PROTEIN SEQUENCE OF 2-147</scope>
    <scope>CLEAVAGE OF INITIATOR METHIONINE</scope>
</reference>
<reference key="7">
    <citation type="journal article" date="2011" name="BMC Syst. Biol.">
        <title>Initial characterization of the human central proteome.</title>
        <authorList>
            <person name="Burkard T.R."/>
            <person name="Planyavsky M."/>
            <person name="Kaupe I."/>
            <person name="Breitwieser F.P."/>
            <person name="Buerckstuemmer T."/>
            <person name="Bennett K.L."/>
            <person name="Superti-Furga G."/>
            <person name="Colinge J."/>
        </authorList>
    </citation>
    <scope>IDENTIFICATION BY MASS SPECTROMETRY [LARGE SCALE ANALYSIS]</scope>
</reference>
<reference key="8">
    <citation type="journal article" date="2014" name="J. Proteomics">
        <title>An enzyme assisted RP-RPLC approach for in-depth analysis of human liver phosphoproteome.</title>
        <authorList>
            <person name="Bian Y."/>
            <person name="Song C."/>
            <person name="Cheng K."/>
            <person name="Dong M."/>
            <person name="Wang F."/>
            <person name="Huang J."/>
            <person name="Sun D."/>
            <person name="Wang L."/>
            <person name="Ye M."/>
            <person name="Zou H."/>
        </authorList>
    </citation>
    <scope>PHOSPHORYLATION [LARGE SCALE ANALYSIS] AT SER-51</scope>
    <scope>IDENTIFICATION BY MASS SPECTROMETRY [LARGE SCALE ANALYSIS]</scope>
    <source>
        <tissue>Liver</tissue>
    </source>
</reference>
<reference key="9">
    <citation type="journal article" date="2004" name="Biochemistry">
        <title>Crystal structures of HbA2 and HbE and modeling of hemoglobin delta 4: interpretation of the thermal stability and the antisickling effect of HbA2 and identification of the ferrocyanide binding site in Hb.</title>
        <authorList>
            <person name="Sen U."/>
            <person name="Dasgupta J."/>
            <person name="Choudhury D."/>
            <person name="Datta P."/>
            <person name="Chakrabarti A."/>
            <person name="Chakrabarty S.B."/>
            <person name="Chakrabarty A."/>
            <person name="Dattagupta J.K."/>
        </authorList>
    </citation>
    <scope>X-RAY CRYSTALLOGRAPHY (1.88 ANGSTROMS) IN COMPLEX WITH HEME AND HBA</scope>
    <scope>SUBUNIT</scope>
</reference>
<reference key="10">
    <citation type="journal article" date="1966" name="Nature">
        <title>Haemoglobin A2: alpha-2-delta-2-16 glycine--&gt;arginine.</title>
        <authorList>
            <person name="Ball E.W."/>
            <person name="Meynell M.J."/>
            <person name="Beale D."/>
            <person name="Kynoch P."/>
            <person name="Lehmann H."/>
            <person name="Strelton A.O.W."/>
        </authorList>
    </citation>
    <scope>VARIANT DELTA' ARG-17</scope>
</reference>
<reference key="11">
    <citation type="journal article" date="1968" name="Nature">
        <title>Haemoglobin Babinga (delta 136 glycine-aspartic acid): a new delta chain variant.</title>
        <authorList>
            <person name="de Jong W.W.W."/>
            <person name="Bernini L.F."/>
        </authorList>
    </citation>
    <scope>VARIANT BABINGA ASP-137</scope>
</reference>
<reference key="12">
    <citation type="journal article" date="1969" name="J. Clin. Invest.">
        <title>Hemoglobin NYU, a delta chain variant, alpha 2 delta 2 Lys.</title>
        <authorList>
            <person name="Ranney H.M."/>
            <person name="Jacobs A.S."/>
            <person name="Ramot B."/>
            <person name="Bradley T.B. Jr."/>
        </authorList>
    </citation>
    <scope>VARIANT NYU LYS-13</scope>
</reference>
<reference key="13">
    <citation type="journal article" date="1971" name="Biochim. Biophys. Acta">
        <title>Hemoglobin A2-Indonesia or alpha 2 delta 2 69(E13) Gly--&gt;Arg.</title>
        <authorList>
            <person name="Lie-Injo L.E."/>
            <person name="Pribadi W."/>
            <person name="Westendorp-Boerma F."/>
            <person name="Efremov G.D."/>
            <person name="Wilson J.B."/>
            <person name="Reynolds C.A."/>
            <person name="Huisman T.H.J."/>
        </authorList>
    </citation>
    <scope>VARIANT INDONESIA ARG-70</scope>
</reference>
<reference key="14">
    <citation type="journal article" date="1974" name="Biochim. Biophys. Acta">
        <title>A new delta chain variant, haemoglobin-A2-Melbourne or alpha2 delta2 43Glu-Lys(CD2).</title>
        <authorList>
            <person name="Sharma R.S."/>
            <person name="Harding D.L."/>
            <person name="Wong S.D."/>
            <person name="Wilson J.B."/>
            <person name="Gravely M.E."/>
            <person name="Huisman T.H.J."/>
        </authorList>
    </citation>
    <scope>VARIANT MELBOURNE LYS-44</scope>
</reference>
<reference key="15">
    <citation type="journal article" date="1975" name="Biochim. Biophys. Acta">
        <title>Hemoglobin-A2-Coburg or alpha2delta2116Arg leads to His (G18).</title>
        <authorList>
            <person name="Sharma R.S."/>
            <person name="Williams L."/>
            <person name="Wilson J.B."/>
            <person name="Huisman T.H.J."/>
        </authorList>
    </citation>
    <scope>VARIANT COBURG HIS-117</scope>
</reference>
<reference key="16">
    <citation type="journal article" date="1976" name="Biochim. Biophys. Acta">
        <title>Hemoglobin A2-Roosevelt: alpha 2 delta 2 20Val replaced by Glu.</title>
        <authorList>
            <person name="Rieder R.F."/>
            <person name="Clegg J.B."/>
            <person name="Weiss H.J."/>
            <person name="Christy N.P."/>
            <person name="Rabinowitz R."/>
        </authorList>
    </citation>
    <scope>VARIANT ROOSEVELT GLU-21</scope>
</reference>
<reference key="17">
    <citation type="journal article" date="1982" name="Hemoglobin">
        <title>Hb A2-Canada or alpha 2 delta 2 99(G1) Asp replaced by Asn, a newly discovered delta chain variant with increased oxygen affinity occurring in cis to beta-thalassemia.</title>
        <authorList>
            <person name="Salkie M.L."/>
            <person name="Gordon P.A."/>
            <person name="Rigal W.M."/>
            <person name="Lam H."/>
            <person name="Wilson J.B."/>
            <person name="Headlee M.E."/>
            <person name="Huisman T.H.J."/>
        </authorList>
    </citation>
    <scope>VARIANT CANADA ASN-100</scope>
</reference>
<reference key="18">
    <citation type="journal article" date="1983" name="Hemoglobin">
        <title>Hb A2-Manzanares or alpha 2 delta 2 121 (GH4) Glu replaced by Val, an unstable delta chain variant observed in a Spanish family.</title>
        <authorList>
            <person name="Romero Garcia C."/>
            <person name="Navarro J.L."/>
            <person name="Lam H."/>
            <person name="Webber B.B."/>
            <person name="Headlee M.G."/>
            <person name="Wilson J.B."/>
            <person name="Huisman T.H.J."/>
        </authorList>
    </citation>
    <scope>VARIANT MANZANARES VAL-122</scope>
</reference>
<reference key="19">
    <citation type="journal article" date="1983" name="Hemoglobin">
        <title>Hb A2-Zagreb or alpha 2 delta 2(125)(H3)Gln replaced by Glu, a new delta chain variant in association with delta beta-thalassemia.</title>
        <authorList>
            <person name="Juricic D."/>
            <person name="Crepinko I."/>
            <person name="Efremov G.D."/>
            <person name="Lam H."/>
            <person name="Webber B.B."/>
            <person name="Headlee M.G."/>
            <person name="Huisman T.H.J."/>
        </authorList>
    </citation>
    <scope>VARIANT ZAGREB GLU-126</scope>
</reference>
<reference key="20">
    <citation type="journal article" date="1984" name="Hemoglobin">
        <title>HbA2 Victoria delta 24 (B6) Gly--&gt;Asp. A new delta chain variant occurring with beta-thalassemia.</title>
        <authorList>
            <person name="Brennan S.O."/>
            <person name="Williamson D."/>
            <person name="Smith M.B."/>
            <person name="Cauchi M.N."/>
            <person name="Macphee A."/>
            <person name="Carrell R.W."/>
        </authorList>
    </citation>
    <scope>VARIANT VICTORIA ASP-25</scope>
</reference>
<reference key="21">
    <citation type="journal article" date="1984" name="Hemoglobin">
        <title>Hemoglobin A2 Fitzroy delta 142 Ala--&gt;Asp: a new delta-chain variant.</title>
        <authorList>
            <person name="Williamson D."/>
            <person name="Brennan S.O."/>
            <person name="Strosberg H."/>
            <person name="Whitty J."/>
            <person name="Carrell R.W."/>
        </authorList>
    </citation>
    <scope>VARIANT FITZROY ASP-143</scope>
</reference>
<reference key="22">
    <citation type="journal article" date="1985" name="Hemoglobin">
        <title>Hemoglobin A2 Honai (alpha 2 delta 2(90)(F6)Glu--&gt;Val): a new delta chain variant.</title>
        <authorList>
            <person name="Fujita S."/>
            <person name="Ohta Y."/>
            <person name="Saito S."/>
            <person name="Kobayashi Y."/>
            <person name="Naritomi Y."/>
            <person name="Kawaguchi T."/>
            <person name="Imamura T."/>
            <person name="Wada Y."/>
            <person name="Hayashi A."/>
        </authorList>
    </citation>
    <scope>VARIANT HONAI VAL-91</scope>
</reference>
<reference key="23">
    <citation type="journal article" date="1985" name="Hemoglobin">
        <title>Hb A2 Yokoshima, alpha(2)delta(2)25(B7)Gly--&gt;Asp, a new delta chain variant found in a Japanese family.</title>
        <authorList>
            <person name="Ohba Y."/>
            <person name="Igarashi M."/>
            <person name="Tsukahara M."/>
            <person name="Nakashima M."/>
            <person name="Sanada C."/>
            <person name="Ami M."/>
            <person name="Arai Y."/>
            <person name="Miyaji T."/>
        </authorList>
    </citation>
    <scope>VARIANT YOKOSHIMA ASP-26</scope>
</reference>
<reference key="24">
    <citation type="journal article" date="1989" name="Biochim. Biophys. Acta">
        <title>Hb A2-Wrens or alpha 2 delta 2 98(FG5) Val--&gt;Met, an unstable delta chain variant identified by sequence analysis of amplified DNA.</title>
        <authorList>
            <person name="Codrington J.F."/>
            <person name="Kutlar F."/>
            <person name="Harris H.F."/>
            <person name="Wilson J.B."/>
            <person name="Stoming T.A."/>
            <person name="Huisman T.H.J."/>
        </authorList>
    </citation>
    <scope>VARIANT WRENS MET-99</scope>
</reference>
<reference key="25">
    <citation type="journal article" date="1991" name="Blood">
        <title>Identification of four novel delta-globin gene mutations in Greek Cypriots using polymerase chain reaction and automated fluorescence-based DNA sequence analysis.</title>
        <authorList>
            <person name="Trifillis P."/>
            <person name="Ioannou P."/>
            <person name="Schwartz E."/>
            <person name="Surrey S."/>
        </authorList>
    </citation>
    <scope>VARIANT YIALOUSA SER-28</scope>
    <scope>VARIANT CORFU CYS-117</scope>
    <scope>VARIANT PELENDRI PRO-142</scope>
</reference>
<reference key="26">
    <citation type="journal article" date="1991" name="Hemoglobin">
        <title>Hb A2-Niigata [delta 1(NA1)Val--&gt;Ala]: a new delta chain variant found in the Japanese population.</title>
        <authorList>
            <person name="Harano T."/>
            <person name="Harano K."/>
            <person name="Kushida Y."/>
            <person name="Ueda S."/>
            <person name="Kawakami H."/>
        </authorList>
    </citation>
    <scope>VARIANT NIIGATA ALA-2</scope>
    <scope>ACETYLATION AT ALA-2 (VARIANT NIIGATA)</scope>
</reference>
<reference key="27">
    <citation type="journal article" date="1991" name="Hemoglobin">
        <title>Hb A2-Parkville or delta 47(CD6)Asp--&gt;Val, a new delta chain variant.</title>
        <authorList>
            <person name="Leung H."/>
            <person name="Gilbert A.T."/>
            <person name="Fleming P.J."/>
            <person name="Wong J."/>
            <person name="Hughes W.G."/>
            <person name="Hussein S."/>
            <person name="Nash A.R."/>
        </authorList>
    </citation>
    <scope>VARIANT PARKVILLE VAL-48</scope>
</reference>
<reference key="28">
    <citation type="journal article" date="1991" name="Hum. Genet.">
        <title>A new delta chain variant hemoglobin A2-Corfu or alpha 2 delta 2 116 Arg--&gt;Cys (G18), detected by delta-globin gene analysis in a Greek family.</title>
        <authorList>
            <person name="Loudianos G."/>
            <person name="Murru S."/>
            <person name="Kanavakis E."/>
            <person name="Metaxotou-Mavromati A."/>
            <person name="Theodoropoulou D."/>
            <person name="Kattamis C."/>
            <person name="Cao A."/>
            <person name="Pirastu M."/>
        </authorList>
    </citation>
    <scope>VARIANT CORFU CYS-117</scope>
</reference>
<reference key="29">
    <citation type="journal article" date="1993" name="Blood">
        <title>Analysis of delta-globin gene mutations in Greek cypriots.</title>
        <authorList>
            <person name="Trifillis P."/>
            <person name="Kyrri A."/>
            <person name="Kalogirou E."/>
            <person name="Kokkofitou A."/>
            <person name="Ioannou P."/>
            <person name="Schwartz E."/>
            <person name="Surrey S."/>
        </authorList>
    </citation>
    <scope>VARIANT ILE-5</scope>
    <scope>VARIANT YIALOUSA SER-28</scope>
</reference>
<reference key="30">
    <citation type="journal article" date="1993" name="Hemoglobin">
        <title>Hb A2-Grovetown or alpha 2 delta (2)75(E19)Leu--&gt;Val.</title>
        <authorList>
            <person name="Molchanova T.P."/>
            <person name="Postnikov Y.V."/>
            <person name="Gu L.-H."/>
            <person name="Huisman T.H.J."/>
        </authorList>
    </citation>
    <scope>VARIANT GROVETOWN VAL-76</scope>
</reference>
<reference key="31">
    <citation type="journal article" date="1993" name="Hum. Mutat.">
        <title>A new delta-chain variant hemoglobin A2-Puglia or alpha 2 delta 2 26 Glu--&gt;Asp (B8), detected by DNA analysis in a family of southern Italian origin.</title>
        <authorList>
            <person name="Loudianos G."/>
            <person name="Porcu S."/>
            <person name="Cossu P."/>
            <person name="Tannoia N."/>
            <person name="Vitucci A."/>
            <person name="Campanale D."/>
            <person name="Cao A."/>
            <person name="Pirastu M."/>
        </authorList>
    </citation>
    <scope>VARIANT PUGLIA ASP-27</scope>
</reference>
<reference key="32">
    <citation type="journal article" date="1994" name="Hemoglobin">
        <title>Hb A2-Sant' Antioco alpha 2 delta (2)93(F9)Cys--&gt;Gly: a new delta chain variant identified by sequencing of amplified DNA.</title>
        <authorList>
            <person name="Galanello R."/>
            <person name="Gasperini D."/>
            <person name="Perseu L."/>
            <person name="Barella S."/>
            <person name="Ideo A."/>
            <person name="Cao A."/>
        </authorList>
    </citation>
    <scope>VARIANT SANT' ANTIOCO GLY-94</scope>
</reference>
<reference key="33">
    <citation type="journal article" date="1995" name="Hemoglobin">
        <title>Hb A2-Agrinio [delta 43(CD2)Glu--&gt;Gly(GAG--&gt;GGG)]: a new delta chain variant detected in a Greek family.</title>
        <authorList>
            <person name="Papadakis M."/>
            <person name="Drakoulakou O."/>
            <person name="Papapanagiotou E."/>
            <person name="Pessini D."/>
            <person name="Loutradi-Anagnostou A."/>
        </authorList>
    </citation>
    <scope>VARIANT AGRINIO GLY-44</scope>
</reference>
<reference key="34">
    <citation type="journal article" date="1997" name="Hum. Mutat.">
        <title>Delta-thalassemic phenotype due to two 'novel' delta-globin gene mutations: CD11[GTC--&gt;GGC (A8)-HbA2-Pylos] and CD 85[TTT--&gt;TCT(F1)-HbA2-Etolia].</title>
        <authorList>
            <person name="Drakoulakou O."/>
            <person name="Papapanagiotou E."/>
            <person name="Loutradi-Anagnostou A."/>
            <person name="Papadakis M."/>
        </authorList>
    </citation>
    <scope>VARIANT PYLOS GLY-12</scope>
    <scope>VARIANT ETOLIA SER-86</scope>
</reference>
<reference key="35">
    <citation type="journal article" date="2002" name="Hemoglobin">
        <title>Hb A2-Monreale delta146(HC3)His--&gt;Arg, a novel delta chain variant detected in west Sicily.</title>
        <authorList>
            <person name="De Angioletti M."/>
            <person name="Di Girgenti C."/>
            <person name="Messineo R."/>
            <person name="Capra M."/>
            <person name="Carestia C."/>
        </authorList>
    </citation>
    <scope>VARIANT MONREALE ARG-147</scope>
</reference>
<reference key="36">
    <citation type="journal article" date="2002" name="Hum. Mutat.">
        <title>Epidemiology of the delta globin alleles in southern Italy shows complex molecular, genetic, and phenotypic features.</title>
        <authorList>
            <person name="De Angioletti M."/>
            <person name="Lacerra G."/>
            <person name="Gaudiano C."/>
            <person name="Mastrolonardo G."/>
            <person name="Pagano L."/>
            <person name="Mastrullo L."/>
            <person name="Masciandaro S."/>
            <person name="Carestia C."/>
        </authorList>
    </citation>
    <scope>VARIANT METAPONTO HIS-37</scope>
    <scope>VARIANT CAMPANIA LYS-58</scope>
    <scope>VARIANT LUCANIA VAL-89</scope>
    <scope>VARIANT CAPRI SER-105</scope>
</reference>
<reference key="37">
    <citation type="journal article" date="2005" name="Hemoglobin">
        <title>Two new delta-globin mutations: Hb A2-Ninive [delta133(H11)Val-Ala] and a delta(+)-thalassemia mutation [-31 (A--&gt;G)] in the TATA box of the delta-globin gene.</title>
        <authorList>
            <person name="Frischknecht H."/>
            <person name="Dutly F."/>
        </authorList>
    </citation>
    <scope>VARIANT NINIVE ALA-134</scope>
</reference>
<reference key="38">
    <citation type="journal article" date="2005" name="Hemoglobin">
        <title>Identification of a new delta chain hemoglobin variant in a beta-thalassemia carrier: Hb A2-mumc [delta13(a10)Ala--&gt;Asp].</title>
        <authorList>
            <person name="Walker L."/>
            <person name="Patterson M."/>
            <person name="Eng B."/>
            <person name="McFarlane A."/>
            <person name="Waye J.S."/>
        </authorList>
    </citation>
    <scope>VARIANT MUMC/CORLEONE ASP-11</scope>
</reference>
<reference key="39">
    <citation type="journal article" date="2006" name="Haematologica">
        <title>Analysis of delta-globin gene alleles in the Sicilian population: identification of five new mutations.</title>
        <authorList>
            <person name="Giambona A."/>
            <person name="Passarello C."/>
            <person name="Ruggeri G."/>
            <person name="Renda D."/>
            <person name="Teresi P."/>
            <person name="Anza M."/>
            <person name="Maggio A."/>
        </authorList>
    </citation>
    <scope>VARIANT CATANIA LEU-3</scope>
    <scope>VARIANT MUMC/CORLEONE ASP-11</scope>
    <scope>VARIANT VENTIMIGLIA GLY-71</scope>
    <scope>VARIANT MONTECHIARO LYS-88</scope>
    <scope>VARIANT BAGHERIA VAL-141</scope>
</reference>
<feature type="initiator methionine" description="Removed" evidence="12 27">
    <location>
        <position position="1"/>
    </location>
</feature>
<feature type="chain" id="PRO_0000053167" description="Hemoglobin subunit delta">
    <location>
        <begin position="2"/>
        <end position="147"/>
    </location>
</feature>
<feature type="domain" description="Globin" evidence="2">
    <location>
        <begin position="3"/>
        <end position="147"/>
    </location>
</feature>
<feature type="binding site" description="distal binding residue" evidence="1">
    <location>
        <position position="64"/>
    </location>
    <ligand>
        <name>heme b</name>
        <dbReference type="ChEBI" id="CHEBI:60344"/>
    </ligand>
    <ligandPart>
        <name>Fe</name>
        <dbReference type="ChEBI" id="CHEBI:18248"/>
    </ligandPart>
</feature>
<feature type="binding site" description="proximal binding residue" evidence="6 37 38">
    <location>
        <position position="93"/>
    </location>
    <ligand>
        <name>heme b</name>
        <dbReference type="ChEBI" id="CHEBI:60344"/>
    </ligand>
    <ligandPart>
        <name>Fe</name>
        <dbReference type="ChEBI" id="CHEBI:18248"/>
    </ligandPart>
</feature>
<feature type="modified residue" description="N-acetylalanine; in variant Niigata" evidence="12">
    <location>
        <position position="2"/>
    </location>
</feature>
<feature type="modified residue" description="Phosphoserine" evidence="39">
    <location>
        <position position="51"/>
    </location>
</feature>
<feature type="sequence variant" id="VAR_003096" description="In Niigata; dbSNP:rs34991152." evidence="12">
    <original>V</original>
    <variation>A</variation>
    <location>
        <position position="2"/>
    </location>
</feature>
<feature type="sequence variant" id="VAR_030499" description="In Catania; dbSNP:rs35433207." evidence="10">
    <original>H</original>
    <variation>L</variation>
    <location>
        <position position="3"/>
    </location>
</feature>
<feature type="sequence variant" id="VAR_003097" description="In Sphakia; dbSNP:rs35433207.">
    <original>H</original>
    <variation>R</variation>
    <location>
        <position position="3"/>
    </location>
</feature>
<feature type="sequence variant" id="VAR_018740" description="In dbSNP:rs35406175." evidence="31">
    <original>T</original>
    <variation>I</variation>
    <location>
        <position position="5"/>
    </location>
</feature>
<feature type="sequence variant" id="VAR_018741" description="In haplotype T11; Kenya; dbSNP:rs35406175." evidence="36">
    <original>T</original>
    <variation>S</variation>
    <location>
        <position position="5"/>
    </location>
</feature>
<feature type="sequence variant" id="VAR_030500" description="In MUMC/Corleone." evidence="8 10">
    <original>A</original>
    <variation>D</variation>
    <location>
        <position position="11"/>
    </location>
</feature>
<feature type="sequence variant" id="VAR_030501" description="In Pylos; dbSNP:rs34090605." evidence="34">
    <original>V</original>
    <variation>G</variation>
    <location>
        <position position="12"/>
    </location>
</feature>
<feature type="sequence variant" id="VAR_003098" description="In NYU; dbSNP:rs34313675." evidence="21">
    <original>N</original>
    <variation>K</variation>
    <location>
        <position position="13"/>
    </location>
</feature>
<feature type="sequence variant" id="VAR_003099" description="In Delta'; dbSNP:rs34012192." evidence="22">
    <original>G</original>
    <variation>R</variation>
    <location>
        <position position="17"/>
    </location>
</feature>
<feature type="sequence variant" id="VAR_003100" description="In Roosevelt; dbSNP:rs34093840." evidence="35">
    <original>V</original>
    <variation>E</variation>
    <location>
        <position position="21"/>
    </location>
</feature>
<feature type="sequence variant" id="VAR_003101" description="In Flatbush; dbSNP:rs35395083.">
    <original>A</original>
    <variation>E</variation>
    <location>
        <position position="23"/>
    </location>
</feature>
<feature type="sequence variant" id="VAR_003102" description="In Victoria; dbSNP:rs34460332." evidence="23">
    <original>G</original>
    <variation>D</variation>
    <location>
        <position position="25"/>
    </location>
</feature>
<feature type="sequence variant" id="VAR_003103" description="In Yokoshima; dbSNP:rs34389944." evidence="17">
    <original>G</original>
    <variation>D</variation>
    <location>
        <position position="26"/>
    </location>
</feature>
<feature type="sequence variant" id="VAR_003104" description="In Puglia; dbSNP:rs34289459." evidence="32">
    <original>E</original>
    <variation>D</variation>
    <location>
        <position position="27"/>
    </location>
</feature>
<feature type="sequence variant" id="VAR_003105" description="In Yialousa; dbSNP:rs35152987." evidence="11 31">
    <original>A</original>
    <variation>S</variation>
    <location>
        <position position="28"/>
    </location>
</feature>
<feature type="sequence variant" id="VAR_030502" description="In Metaponto; dbSNP:rs34383555." evidence="5">
    <original>P</original>
    <variation>H</variation>
    <location>
        <position position="37"/>
    </location>
</feature>
<feature type="sequence variant" id="VAR_003106" description="In Agrinio; dbSNP:rs36084266." evidence="33">
    <original>E</original>
    <variation>G</variation>
    <location>
        <position position="44"/>
    </location>
</feature>
<feature type="sequence variant" id="VAR_003107" description="In Melbourne; dbSNP:rs35166721." evidence="18">
    <original>E</original>
    <variation>K</variation>
    <location>
        <position position="44"/>
    </location>
</feature>
<feature type="sequence variant" id="VAR_003108" description="In Parkville; dbSNP:rs34977235." evidence="13">
    <original>D</original>
    <variation>V</variation>
    <location>
        <position position="48"/>
    </location>
</feature>
<feature type="sequence variant" id="VAR_003109" description="In Adria; dbSNP:rs34489183.">
    <original>P</original>
    <variation>R</variation>
    <location>
        <position position="52"/>
    </location>
</feature>
<feature type="sequence variant" id="VAR_030503" description="In Campania; dbSNP:rs35666685." evidence="5">
    <original>N</original>
    <variation>K</variation>
    <location>
        <position position="58"/>
    </location>
</feature>
<feature type="sequence variant" id="VAR_003110" description="In Indonesia; dbSNP:rs35913713." evidence="19">
    <original>G</original>
    <variation>R</variation>
    <location>
        <position position="70"/>
    </location>
</feature>
<feature type="sequence variant" id="VAR_030504" description="In Ventimiglia; dbSNP:rs63750423." evidence="10">
    <original>A</original>
    <variation>G</variation>
    <location>
        <position position="71"/>
    </location>
</feature>
<feature type="sequence variant" id="VAR_003111" description="In Grovetown; dbSNP:rs34430836." evidence="30">
    <original>L</original>
    <variation>V</variation>
    <location>
        <position position="76"/>
    </location>
</feature>
<feature type="sequence variant" id="VAR_030505" description="In Etolia; dbSNP:rs35633566." evidence="34">
    <original>F</original>
    <variation>S</variation>
    <location>
        <position position="86"/>
    </location>
</feature>
<feature type="sequence variant" id="VAR_030506" description="In Montechiaro; dbSNP:rs63750674." evidence="10">
    <original>Q</original>
    <variation>K</variation>
    <location>
        <position position="88"/>
    </location>
</feature>
<feature type="sequence variant" id="VAR_030507" description="In Lucania; dbSNP:rs34933313." evidence="5">
    <original>L</original>
    <variation>V</variation>
    <location>
        <position position="89"/>
    </location>
</feature>
<feature type="sequence variant" id="VAR_003112" description="In Honai; dbSNP:rs34420481." evidence="16">
    <original>E</original>
    <variation>V</variation>
    <location>
        <position position="91"/>
    </location>
</feature>
<feature type="sequence variant" id="VAR_014277" description="In Sant' Antioco; dbSNP:rs28933077." evidence="29">
    <original>C</original>
    <variation>G</variation>
    <location>
        <position position="94"/>
    </location>
</feature>
<feature type="sequence variant" id="VAR_003113" description="In Wrens; unstable; dbSNP:rs28933076." evidence="15">
    <original>V</original>
    <variation>M</variation>
    <location>
        <position position="99"/>
    </location>
</feature>
<feature type="sequence variant" id="VAR_003114" description="In Canada; O(2) affinity up; dbSNP:rs35329985." evidence="28">
    <original>D</original>
    <variation>N</variation>
    <location>
        <position position="100"/>
    </location>
</feature>
<feature type="sequence variant" id="VAR_030508" description="In Capri; dbSNP:rs34390965." evidence="5">
    <original>R</original>
    <variation>S</variation>
    <location>
        <position position="105"/>
    </location>
</feature>
<feature type="sequence variant" id="VAR_003115" description="In Corfu/Troodos; dbSNP:rs33971270." evidence="9 11 14">
    <original>R</original>
    <variation>C</variation>
    <location>
        <position position="117"/>
    </location>
</feature>
<feature type="sequence variant" id="VAR_003116" description="In Coburg; dbSNP:rs34536353." evidence="3">
    <original>R</original>
    <variation>H</variation>
    <location>
        <position position="117"/>
    </location>
</feature>
<feature type="sequence variant" id="VAR_003117" description="In LiangCheng; dbSNP:rs36049174.">
    <original>N</original>
    <variation>D</variation>
    <location>
        <position position="118"/>
    </location>
</feature>
<feature type="sequence variant" id="VAR_003118" description="In Manzanares; unstable; dbSNP:rs35790721." evidence="25">
    <original>E</original>
    <variation>V</variation>
    <location>
        <position position="122"/>
    </location>
</feature>
<feature type="sequence variant" id="VAR_003119" description="In Zagreb; dbSNP:rs36078803." evidence="26">
    <original>Q</original>
    <variation>E</variation>
    <location>
        <position position="126"/>
    </location>
</feature>
<feature type="sequence variant" id="VAR_030509" description="In Ninive; dbSNP:rs34802738." evidence="7">
    <original>V</original>
    <variation>A</variation>
    <location>
        <position position="134"/>
    </location>
</feature>
<feature type="sequence variant" id="VAR_003120" description="In Babinga; dbSNP:rs35849348." evidence="20">
    <original>G</original>
    <variation>D</variation>
    <location>
        <position position="137"/>
    </location>
</feature>
<feature type="sequence variant" id="VAR_030510" description="In Bagheria; dbSNP:rs63750461." evidence="10">
    <original>A</original>
    <variation>V</variation>
    <location>
        <position position="141"/>
    </location>
</feature>
<feature type="sequence variant" id="VAR_003121" description="In Pelendri; dbSNP:rs33956485." evidence="11">
    <original>L</original>
    <variation>P</variation>
    <location>
        <position position="142"/>
    </location>
</feature>
<feature type="sequence variant" id="VAR_003122" description="In Fitzroy; dbSNP:rs35848600." evidence="24">
    <original>A</original>
    <variation>D</variation>
    <location>
        <position position="143"/>
    </location>
</feature>
<feature type="sequence variant" id="VAR_014278" description="In Monreale; dbSNP:rs34149886." evidence="4">
    <original>H</original>
    <variation>R</variation>
    <location>
        <position position="147"/>
    </location>
</feature>
<feature type="helix" evidence="40">
    <location>
        <begin position="6"/>
        <end position="16"/>
    </location>
</feature>
<feature type="turn" evidence="40">
    <location>
        <begin position="21"/>
        <end position="23"/>
    </location>
</feature>
<feature type="helix" evidence="40">
    <location>
        <begin position="24"/>
        <end position="35"/>
    </location>
</feature>
<feature type="helix" evidence="40">
    <location>
        <begin position="37"/>
        <end position="46"/>
    </location>
</feature>
<feature type="helix" evidence="40">
    <location>
        <begin position="52"/>
        <end position="56"/>
    </location>
</feature>
<feature type="helix" evidence="40">
    <location>
        <begin position="59"/>
        <end position="77"/>
    </location>
</feature>
<feature type="turn" evidence="40">
    <location>
        <begin position="78"/>
        <end position="80"/>
    </location>
</feature>
<feature type="helix" evidence="40">
    <location>
        <begin position="82"/>
        <end position="85"/>
    </location>
</feature>
<feature type="helix" evidence="40">
    <location>
        <begin position="87"/>
        <end position="94"/>
    </location>
</feature>
<feature type="helix" evidence="40">
    <location>
        <begin position="102"/>
        <end position="119"/>
    </location>
</feature>
<feature type="helix" evidence="40">
    <location>
        <begin position="120"/>
        <end position="122"/>
    </location>
</feature>
<feature type="helix" evidence="40">
    <location>
        <begin position="125"/>
        <end position="142"/>
    </location>
</feature>
<feature type="helix" evidence="40">
    <location>
        <begin position="144"/>
        <end position="146"/>
    </location>
</feature>
<proteinExistence type="evidence at protein level"/>